<keyword id="KW-0067">ATP-binding</keyword>
<keyword id="KW-0131">Cell cycle</keyword>
<keyword id="KW-0132">Cell division</keyword>
<keyword id="KW-0963">Cytoplasm</keyword>
<keyword id="KW-0206">Cytoskeleton</keyword>
<keyword id="KW-0418">Kinase</keyword>
<keyword id="KW-0460">Magnesium</keyword>
<keyword id="KW-0479">Metal-binding</keyword>
<keyword id="KW-0498">Mitosis</keyword>
<keyword id="KW-0547">Nucleotide-binding</keyword>
<keyword id="KW-0539">Nucleus</keyword>
<keyword id="KW-0597">Phosphoprotein</keyword>
<keyword id="KW-1185">Reference proteome</keyword>
<keyword id="KW-0723">Serine/threonine-protein kinase</keyword>
<keyword id="KW-0808">Transferase</keyword>
<keyword id="KW-0829">Tyrosine-protein kinase</keyword>
<keyword id="KW-0832">Ubl conjugation</keyword>
<accession>Q4R6S5</accession>
<dbReference type="EC" id="2.7.12.1" evidence="1"/>
<dbReference type="EMBL" id="AB169105">
    <property type="protein sequence ID" value="BAE01199.1"/>
    <property type="molecule type" value="mRNA"/>
</dbReference>
<dbReference type="RefSeq" id="NP_001272176.1">
    <property type="nucleotide sequence ID" value="NM_001285247.1"/>
</dbReference>
<dbReference type="RefSeq" id="XP_045252025.1">
    <property type="nucleotide sequence ID" value="XM_045396090.2"/>
</dbReference>
<dbReference type="SMR" id="Q4R6S5"/>
<dbReference type="STRING" id="9541.ENSMFAP00000040943"/>
<dbReference type="GeneID" id="101866219"/>
<dbReference type="eggNOG" id="KOG0667">
    <property type="taxonomic scope" value="Eukaryota"/>
</dbReference>
<dbReference type="Proteomes" id="UP000233100">
    <property type="component" value="Unplaced"/>
</dbReference>
<dbReference type="GO" id="GO:0005737">
    <property type="term" value="C:cytoplasm"/>
    <property type="evidence" value="ECO:0000250"/>
    <property type="project" value="UniProtKB"/>
</dbReference>
<dbReference type="GO" id="GO:0010494">
    <property type="term" value="C:cytoplasmic stress granule"/>
    <property type="evidence" value="ECO:0000250"/>
    <property type="project" value="UniProtKB"/>
</dbReference>
<dbReference type="GO" id="GO:0016607">
    <property type="term" value="C:nuclear speck"/>
    <property type="evidence" value="ECO:0000250"/>
    <property type="project" value="UniProtKB"/>
</dbReference>
<dbReference type="GO" id="GO:0005634">
    <property type="term" value="C:nucleus"/>
    <property type="evidence" value="ECO:0000250"/>
    <property type="project" value="UniProtKB"/>
</dbReference>
<dbReference type="GO" id="GO:0000242">
    <property type="term" value="C:pericentriolar material"/>
    <property type="evidence" value="ECO:0000250"/>
    <property type="project" value="UniProtKB"/>
</dbReference>
<dbReference type="GO" id="GO:0005524">
    <property type="term" value="F:ATP binding"/>
    <property type="evidence" value="ECO:0000250"/>
    <property type="project" value="UniProtKB"/>
</dbReference>
<dbReference type="GO" id="GO:0000287">
    <property type="term" value="F:magnesium ion binding"/>
    <property type="evidence" value="ECO:0000250"/>
    <property type="project" value="UniProtKB"/>
</dbReference>
<dbReference type="GO" id="GO:0004672">
    <property type="term" value="F:protein kinase activity"/>
    <property type="evidence" value="ECO:0000250"/>
    <property type="project" value="UniProtKB"/>
</dbReference>
<dbReference type="GO" id="GO:0106310">
    <property type="term" value="F:protein serine kinase activity"/>
    <property type="evidence" value="ECO:0007669"/>
    <property type="project" value="RHEA"/>
</dbReference>
<dbReference type="GO" id="GO:0004674">
    <property type="term" value="F:protein serine/threonine kinase activity"/>
    <property type="evidence" value="ECO:0000250"/>
    <property type="project" value="UniProtKB"/>
</dbReference>
<dbReference type="GO" id="GO:0004712">
    <property type="term" value="F:protein serine/threonine/tyrosine kinase activity"/>
    <property type="evidence" value="ECO:0007669"/>
    <property type="project" value="UniProtKB-EC"/>
</dbReference>
<dbReference type="GO" id="GO:0004713">
    <property type="term" value="F:protein tyrosine kinase activity"/>
    <property type="evidence" value="ECO:0007669"/>
    <property type="project" value="UniProtKB-KW"/>
</dbReference>
<dbReference type="GO" id="GO:0051301">
    <property type="term" value="P:cell division"/>
    <property type="evidence" value="ECO:0007669"/>
    <property type="project" value="UniProtKB-KW"/>
</dbReference>
<dbReference type="GO" id="GO:0030218">
    <property type="term" value="P:erythrocyte differentiation"/>
    <property type="evidence" value="ECO:0000250"/>
    <property type="project" value="UniProtKB"/>
</dbReference>
<dbReference type="GO" id="GO:0043066">
    <property type="term" value="P:negative regulation of apoptotic process"/>
    <property type="evidence" value="ECO:0000250"/>
    <property type="project" value="UniProtKB"/>
</dbReference>
<dbReference type="GO" id="GO:0035063">
    <property type="term" value="P:nuclear speck organization"/>
    <property type="evidence" value="ECO:0000250"/>
    <property type="project" value="UniProtKB"/>
</dbReference>
<dbReference type="GO" id="GO:1903008">
    <property type="term" value="P:organelle disassembly"/>
    <property type="evidence" value="ECO:0000250"/>
    <property type="project" value="UniProtKB"/>
</dbReference>
<dbReference type="GO" id="GO:1902751">
    <property type="term" value="P:positive regulation of cell cycle G2/M phase transition"/>
    <property type="evidence" value="ECO:0000250"/>
    <property type="project" value="UniProtKB"/>
</dbReference>
<dbReference type="GO" id="GO:0006468">
    <property type="term" value="P:protein phosphorylation"/>
    <property type="evidence" value="ECO:0000250"/>
    <property type="project" value="UniProtKB"/>
</dbReference>
<dbReference type="GO" id="GO:0080135">
    <property type="term" value="P:regulation of cellular response to stress"/>
    <property type="evidence" value="ECO:0000250"/>
    <property type="project" value="UniProtKB"/>
</dbReference>
<dbReference type="GO" id="GO:1903432">
    <property type="term" value="P:regulation of TORC1 signaling"/>
    <property type="evidence" value="ECO:0000250"/>
    <property type="project" value="UniProtKB"/>
</dbReference>
<dbReference type="GO" id="GO:0035617">
    <property type="term" value="P:stress granule disassembly"/>
    <property type="evidence" value="ECO:0000250"/>
    <property type="project" value="UniProtKB"/>
</dbReference>
<dbReference type="CDD" id="cd14224">
    <property type="entry name" value="PKc_DYRK2_3"/>
    <property type="match status" value="1"/>
</dbReference>
<dbReference type="FunFam" id="1.10.510.10:FF:000112">
    <property type="entry name" value="Putative dual specificity tyrosine-phosphorylation-regulated kinase 2"/>
    <property type="match status" value="1"/>
</dbReference>
<dbReference type="FunFam" id="3.30.200.20:FF:000127">
    <property type="entry name" value="Putative dual specificity tyrosine-phosphorylation-regulated kinase 2"/>
    <property type="match status" value="1"/>
</dbReference>
<dbReference type="Gene3D" id="3.30.10.30">
    <property type="entry name" value="DYRK"/>
    <property type="match status" value="1"/>
</dbReference>
<dbReference type="Gene3D" id="3.30.200.20">
    <property type="entry name" value="Phosphorylase Kinase, domain 1"/>
    <property type="match status" value="1"/>
</dbReference>
<dbReference type="Gene3D" id="1.10.510.10">
    <property type="entry name" value="Transferase(Phosphotransferase) domain 1"/>
    <property type="match status" value="1"/>
</dbReference>
<dbReference type="InterPro" id="IPR042521">
    <property type="entry name" value="DYRK"/>
</dbReference>
<dbReference type="InterPro" id="IPR011009">
    <property type="entry name" value="Kinase-like_dom_sf"/>
</dbReference>
<dbReference type="InterPro" id="IPR000719">
    <property type="entry name" value="Prot_kinase_dom"/>
</dbReference>
<dbReference type="InterPro" id="IPR017441">
    <property type="entry name" value="Protein_kinase_ATP_BS"/>
</dbReference>
<dbReference type="InterPro" id="IPR008271">
    <property type="entry name" value="Ser/Thr_kinase_AS"/>
</dbReference>
<dbReference type="InterPro" id="IPR050494">
    <property type="entry name" value="Ser_Thr_dual-spec_kinase"/>
</dbReference>
<dbReference type="PANTHER" id="PTHR24058">
    <property type="entry name" value="DUAL SPECIFICITY PROTEIN KINASE"/>
    <property type="match status" value="1"/>
</dbReference>
<dbReference type="PANTHER" id="PTHR24058:SF35">
    <property type="entry name" value="DUAL SPECIFICITY TYROSINE-PHOSPHORYLATION-REGULATED KINASE 3"/>
    <property type="match status" value="1"/>
</dbReference>
<dbReference type="Pfam" id="PF00069">
    <property type="entry name" value="Pkinase"/>
    <property type="match status" value="1"/>
</dbReference>
<dbReference type="SMART" id="SM00220">
    <property type="entry name" value="S_TKc"/>
    <property type="match status" value="1"/>
</dbReference>
<dbReference type="SUPFAM" id="SSF56112">
    <property type="entry name" value="Protein kinase-like (PK-like)"/>
    <property type="match status" value="1"/>
</dbReference>
<dbReference type="PROSITE" id="PS00107">
    <property type="entry name" value="PROTEIN_KINASE_ATP"/>
    <property type="match status" value="1"/>
</dbReference>
<dbReference type="PROSITE" id="PS50011">
    <property type="entry name" value="PROTEIN_KINASE_DOM"/>
    <property type="match status" value="1"/>
</dbReference>
<dbReference type="PROSITE" id="PS00108">
    <property type="entry name" value="PROTEIN_KINASE_ST"/>
    <property type="match status" value="1"/>
</dbReference>
<reference key="1">
    <citation type="submission" date="2005-06" db="EMBL/GenBank/DDBJ databases">
        <title>DNA sequences of macaque genes expressed in brain or testis and its evolutionary implications.</title>
        <authorList>
            <consortium name="International consortium for macaque cDNA sequencing and analysis"/>
        </authorList>
    </citation>
    <scope>NUCLEOTIDE SEQUENCE [LARGE SCALE MRNA]</scope>
    <source>
        <tissue>Testis</tissue>
    </source>
</reference>
<name>DYRK3_MACFA</name>
<feature type="chain" id="PRO_0000291536" description="Dual specificity tyrosine-phosphorylation-regulated kinase 3">
    <location>
        <begin position="1"/>
        <end position="568"/>
    </location>
</feature>
<feature type="domain" description="Protein kinase" evidence="4">
    <location>
        <begin position="189"/>
        <end position="502"/>
    </location>
</feature>
<feature type="region of interest" description="Disordered" evidence="1">
    <location>
        <begin position="1"/>
        <end position="168"/>
    </location>
</feature>
<feature type="short sequence motif" description="Nuclear localization signal" evidence="1">
    <location>
        <begin position="448"/>
        <end position="461"/>
    </location>
</feature>
<feature type="compositionally biased region" description="Polar residues" evidence="6">
    <location>
        <begin position="77"/>
        <end position="114"/>
    </location>
</feature>
<feature type="active site" description="Proton acceptor" evidence="2 4 5">
    <location>
        <position position="315"/>
    </location>
</feature>
<feature type="binding site" evidence="4">
    <location>
        <begin position="195"/>
        <end position="203"/>
    </location>
    <ligand>
        <name>ATP</name>
        <dbReference type="ChEBI" id="CHEBI:30616"/>
    </ligand>
</feature>
<feature type="binding site" evidence="3 4">
    <location>
        <position position="218"/>
    </location>
    <ligand>
        <name>ATP</name>
        <dbReference type="ChEBI" id="CHEBI:30616"/>
    </ligand>
</feature>
<feature type="modified residue" description="Phosphoserine" evidence="1">
    <location>
        <position position="330"/>
    </location>
</feature>
<feature type="modified residue" description="Phosphotyrosine" evidence="3">
    <location>
        <position position="349"/>
    </location>
</feature>
<evidence type="ECO:0000250" key="1">
    <source>
        <dbReference type="UniProtKB" id="O43781"/>
    </source>
</evidence>
<evidence type="ECO:0000250" key="2">
    <source>
        <dbReference type="UniProtKB" id="P28523"/>
    </source>
</evidence>
<evidence type="ECO:0000250" key="3">
    <source>
        <dbReference type="UniProtKB" id="Q922Y0"/>
    </source>
</evidence>
<evidence type="ECO:0000255" key="4">
    <source>
        <dbReference type="PROSITE-ProRule" id="PRU00159"/>
    </source>
</evidence>
<evidence type="ECO:0000255" key="5">
    <source>
        <dbReference type="PROSITE-ProRule" id="PRU10027"/>
    </source>
</evidence>
<evidence type="ECO:0000256" key="6">
    <source>
        <dbReference type="SAM" id="MobiDB-lite"/>
    </source>
</evidence>
<evidence type="ECO:0000303" key="7">
    <source ref="1"/>
</evidence>
<evidence type="ECO:0000305" key="8"/>
<protein>
    <recommendedName>
        <fullName>Dual specificity tyrosine-phosphorylation-regulated kinase 3</fullName>
        <ecNumber evidence="1">2.7.12.1</ecNumber>
    </recommendedName>
</protein>
<comment type="function">
    <text evidence="1">Dual-specificity protein kinase that promotes disassembly of several types of membraneless organelles during mitosis, such as stress granules, nuclear speckles and pericentriolar material. Dual-specificity tyrosine-regulated kinases (DYRKs) autophosphorylate a critical tyrosine residue in their activation loop and phosphorylate their substrate on serine and threonine residues. Acts as a central dissolvase of membraneless organelles during the G2-to-M transition, after the nuclear-envelope breakdown: acts by mediating phosphorylation of multiple serine and threonine residues in unstructured domains of proteins, such as SRRM1 and PCM1. Does not mediate disassembly of all membraneless organelles: disassembly of P-body and nucleolus is not regulated by DYRK3. Dissolution of membraneless organelles at the onset of mitosis is also required to release mitotic regulators, such as ZNF207, from liquid-unmixed organelles where they are sequestered and keep them dissolved during mitosis. Regulates mTORC1 by mediating the dissolution of stress granules: during stressful conditions, DYRK3 partitions from the cytosol to the stress granule, together with mTORC1 components, which prevents mTORC1 signaling. When stress signals are gone, the kinase activity of DYRK3 is required for the dissolution of stress granule and mTORC1 relocation to the cytosol: acts by mediating the phosphorylation of the mTORC1 inhibitor AKT1S1, allowing full reactivation of mTORC1 signaling. Also acts as a negative regulator of EPO-dependent erythropoiesis: may place an upper limit on red cell production during stress erythropoiesis. Inhibits cell death due to cytokine withdrawal in hematopoietic progenitor cells. Promotes cell survival upon genotoxic stress through phosphorylation of SIRT1: this in turn inhibits p53/TP53 activity and apoptosis.</text>
</comment>
<comment type="catalytic activity">
    <reaction evidence="1">
        <text>L-seryl-[protein] + ATP = O-phospho-L-seryl-[protein] + ADP + H(+)</text>
        <dbReference type="Rhea" id="RHEA:17989"/>
        <dbReference type="Rhea" id="RHEA-COMP:9863"/>
        <dbReference type="Rhea" id="RHEA-COMP:11604"/>
        <dbReference type="ChEBI" id="CHEBI:15378"/>
        <dbReference type="ChEBI" id="CHEBI:29999"/>
        <dbReference type="ChEBI" id="CHEBI:30616"/>
        <dbReference type="ChEBI" id="CHEBI:83421"/>
        <dbReference type="ChEBI" id="CHEBI:456216"/>
        <dbReference type="EC" id="2.7.12.1"/>
    </reaction>
</comment>
<comment type="catalytic activity">
    <reaction evidence="1">
        <text>L-threonyl-[protein] + ATP = O-phospho-L-threonyl-[protein] + ADP + H(+)</text>
        <dbReference type="Rhea" id="RHEA:46608"/>
        <dbReference type="Rhea" id="RHEA-COMP:11060"/>
        <dbReference type="Rhea" id="RHEA-COMP:11605"/>
        <dbReference type="ChEBI" id="CHEBI:15378"/>
        <dbReference type="ChEBI" id="CHEBI:30013"/>
        <dbReference type="ChEBI" id="CHEBI:30616"/>
        <dbReference type="ChEBI" id="CHEBI:61977"/>
        <dbReference type="ChEBI" id="CHEBI:456216"/>
        <dbReference type="EC" id="2.7.12.1"/>
    </reaction>
</comment>
<comment type="catalytic activity">
    <reaction evidence="1">
        <text>L-tyrosyl-[protein] + ATP = O-phospho-L-tyrosyl-[protein] + ADP + H(+)</text>
        <dbReference type="Rhea" id="RHEA:10596"/>
        <dbReference type="Rhea" id="RHEA-COMP:10136"/>
        <dbReference type="Rhea" id="RHEA-COMP:20101"/>
        <dbReference type="ChEBI" id="CHEBI:15378"/>
        <dbReference type="ChEBI" id="CHEBI:30616"/>
        <dbReference type="ChEBI" id="CHEBI:46858"/>
        <dbReference type="ChEBI" id="CHEBI:61978"/>
        <dbReference type="ChEBI" id="CHEBI:456216"/>
        <dbReference type="EC" id="2.7.12.1"/>
    </reaction>
</comment>
<comment type="cofactor">
    <cofactor evidence="1">
        <name>Mg(2+)</name>
        <dbReference type="ChEBI" id="CHEBI:18420"/>
    </cofactor>
</comment>
<comment type="activity regulation">
    <text evidence="1">Protein kinase activity is activated following autophosphorylation at Tyr-349.</text>
</comment>
<comment type="subunit">
    <text evidence="3">Interacts with SIRT1.</text>
</comment>
<comment type="subcellular location">
    <subcellularLocation>
        <location evidence="1">Nucleus</location>
    </subcellularLocation>
    <subcellularLocation>
        <location evidence="1">Cytoplasm</location>
    </subcellularLocation>
    <subcellularLocation>
        <location evidence="1">Nucleus speckle</location>
    </subcellularLocation>
    <subcellularLocation>
        <location evidence="1">Cytoplasmic granule</location>
    </subcellularLocation>
    <subcellularLocation>
        <location evidence="1">Cytoplasm</location>
        <location evidence="1">Cytoskeleton</location>
        <location evidence="1">Microtubule organizing center</location>
        <location evidence="1">Centrosome</location>
    </subcellularLocation>
    <text evidence="1">Associates with membraneless organelles in the cytoplasm and nucleus. Shuttles between cytoplasm and stress granules. Localized predominantly on distinct speckles distributed throughout the cytoplasm of the cell. At low concentration, showns a homogeneous distribution throughout the cytoplasm and does not condense in speckles. During oxidative and osmotic stress, localizes to stress granules.</text>
</comment>
<comment type="domain">
    <text evidence="1">The N-terminal domain, which is intrinsically disordered, is required for stress granule localization.</text>
</comment>
<comment type="PTM">
    <text evidence="1">Protein kinase activity is activated following autophosphorylation at Tyr-349. Autophosphorylation at Ser-330 stabilizes the protein and enhances the protein kinase activity.</text>
</comment>
<comment type="PTM">
    <text evidence="1">Ubiquitinated at anaphase by the anaphase-promoting complex (APC/C), leading to its degradation by the proteasome.</text>
</comment>
<comment type="similarity">
    <text evidence="8">Belongs to the protein kinase superfamily. CMGC Ser/Thr protein kinase family. MNB/DYRK subfamily.</text>
</comment>
<organism>
    <name type="scientific">Macaca fascicularis</name>
    <name type="common">Crab-eating macaque</name>
    <name type="synonym">Cynomolgus monkey</name>
    <dbReference type="NCBI Taxonomy" id="9541"/>
    <lineage>
        <taxon>Eukaryota</taxon>
        <taxon>Metazoa</taxon>
        <taxon>Chordata</taxon>
        <taxon>Craniata</taxon>
        <taxon>Vertebrata</taxon>
        <taxon>Euteleostomi</taxon>
        <taxon>Mammalia</taxon>
        <taxon>Eutheria</taxon>
        <taxon>Euarchontoglires</taxon>
        <taxon>Primates</taxon>
        <taxon>Haplorrhini</taxon>
        <taxon>Catarrhini</taxon>
        <taxon>Cercopithecidae</taxon>
        <taxon>Cercopithecinae</taxon>
        <taxon>Macaca</taxon>
    </lineage>
</organism>
<sequence>MKWKEKLGDGVYDTFMMIDETKCPPCSNVLCNPSEPPPPRRLNMTTEKFIRDHTQHFLDGGEMKVEQLFQEFGNRKSNTVQSDGISDSEKCSPTVSQGKSSDCLNTVKSNSSSKAPKVVPLTPEQALKQYKHHLTAYEKLEIINYPEIYFVGPNAKKRHGVIGGPNNGGYDDADGAYIHVPRDHLAYRYEVLKIIGKGSFGQVARVYDHKLRQYVALKMVRNEKRFHRQAAEEIRILEHLKKQDKTGSMNVIHMLESFTFRNHVCMAFELLSIDLYELIKKNKFQGFSVQLVRKFAQSILQSLDALHKNKIIHCDLKPENILLKHHGRSSTKVIDFGSSCFEYQKLYTYIQSRFYRAPEIILGSRYSTPIDIWSFGCILAELLTGQPLFPGEDEGDQLACMMELLGMPPPKLLEQSKRAKYFINSKGIPRYCSVTTQADGRVVLVGGRSRRGKKRGPPGSKDWGTALKGCDDYLFIEFLKRCLHWDPSARLTPAQALRHPWISKSVPRPLTTIDKVSGKRIVNPASAFQGLGSKLPPVVGIANKLKANLMSETNGSIPLCSVLPKLIS</sequence>
<gene>
    <name evidence="1" type="primary">DYRK3</name>
    <name evidence="7" type="ORF">QtsA-17232</name>
</gene>
<proteinExistence type="evidence at transcript level"/>